<sequence>MNVIQTIDAEQIGKLAEARAVPDFKPGDNLRVSVRVTEGERTRIQAFEGVCIARSNRGINSNFTVRKISYGEGVERVFPLYSPNVTEIAVTRRGVVRRAKLYYLRGRRGKSARIAEAARETNAD</sequence>
<keyword id="KW-1185">Reference proteome</keyword>
<keyword id="KW-0687">Ribonucleoprotein</keyword>
<keyword id="KW-0689">Ribosomal protein</keyword>
<protein>
    <recommendedName>
        <fullName evidence="1">Large ribosomal subunit protein bL19</fullName>
    </recommendedName>
    <alternativeName>
        <fullName evidence="2">50S ribosomal protein L19</fullName>
    </alternativeName>
</protein>
<feature type="chain" id="PRO_1000049626" description="Large ribosomal subunit protein bL19">
    <location>
        <begin position="1"/>
        <end position="124"/>
    </location>
</feature>
<comment type="function">
    <text evidence="1">This protein is located at the 30S-50S ribosomal subunit interface and may play a role in the structure and function of the aminoacyl-tRNA binding site.</text>
</comment>
<comment type="similarity">
    <text evidence="1">Belongs to the bacterial ribosomal protein bL19 family.</text>
</comment>
<gene>
    <name evidence="1" type="primary">rplS</name>
    <name type="ordered locus">Acry_2150</name>
</gene>
<accession>A5G0G7</accession>
<name>RL19_ACICJ</name>
<proteinExistence type="inferred from homology"/>
<evidence type="ECO:0000255" key="1">
    <source>
        <dbReference type="HAMAP-Rule" id="MF_00402"/>
    </source>
</evidence>
<evidence type="ECO:0000305" key="2"/>
<reference key="1">
    <citation type="submission" date="2007-05" db="EMBL/GenBank/DDBJ databases">
        <title>Complete sequence of chromosome of Acidiphilium cryptum JF-5.</title>
        <authorList>
            <consortium name="US DOE Joint Genome Institute"/>
            <person name="Copeland A."/>
            <person name="Lucas S."/>
            <person name="Lapidus A."/>
            <person name="Barry K."/>
            <person name="Detter J.C."/>
            <person name="Glavina del Rio T."/>
            <person name="Hammon N."/>
            <person name="Israni S."/>
            <person name="Dalin E."/>
            <person name="Tice H."/>
            <person name="Pitluck S."/>
            <person name="Sims D."/>
            <person name="Brettin T."/>
            <person name="Bruce D."/>
            <person name="Han C."/>
            <person name="Schmutz J."/>
            <person name="Larimer F."/>
            <person name="Land M."/>
            <person name="Hauser L."/>
            <person name="Kyrpides N."/>
            <person name="Kim E."/>
            <person name="Magnuson T."/>
            <person name="Richardson P."/>
        </authorList>
    </citation>
    <scope>NUCLEOTIDE SEQUENCE [LARGE SCALE GENOMIC DNA]</scope>
    <source>
        <strain>JF-5</strain>
    </source>
</reference>
<dbReference type="EMBL" id="CP000697">
    <property type="protein sequence ID" value="ABQ31349.1"/>
    <property type="molecule type" value="Genomic_DNA"/>
</dbReference>
<dbReference type="RefSeq" id="WP_012039844.1">
    <property type="nucleotide sequence ID" value="NC_009484.1"/>
</dbReference>
<dbReference type="SMR" id="A5G0G7"/>
<dbReference type="STRING" id="349163.Acry_2150"/>
<dbReference type="KEGG" id="acr:Acry_2150"/>
<dbReference type="eggNOG" id="COG0335">
    <property type="taxonomic scope" value="Bacteria"/>
</dbReference>
<dbReference type="HOGENOM" id="CLU_103507_1_0_5"/>
<dbReference type="Proteomes" id="UP000000245">
    <property type="component" value="Chromosome"/>
</dbReference>
<dbReference type="GO" id="GO:0022625">
    <property type="term" value="C:cytosolic large ribosomal subunit"/>
    <property type="evidence" value="ECO:0007669"/>
    <property type="project" value="TreeGrafter"/>
</dbReference>
<dbReference type="GO" id="GO:0003735">
    <property type="term" value="F:structural constituent of ribosome"/>
    <property type="evidence" value="ECO:0007669"/>
    <property type="project" value="InterPro"/>
</dbReference>
<dbReference type="GO" id="GO:0006412">
    <property type="term" value="P:translation"/>
    <property type="evidence" value="ECO:0007669"/>
    <property type="project" value="UniProtKB-UniRule"/>
</dbReference>
<dbReference type="FunFam" id="2.30.30.790:FF:000001">
    <property type="entry name" value="50S ribosomal protein L19"/>
    <property type="match status" value="1"/>
</dbReference>
<dbReference type="Gene3D" id="2.30.30.790">
    <property type="match status" value="1"/>
</dbReference>
<dbReference type="HAMAP" id="MF_00402">
    <property type="entry name" value="Ribosomal_bL19"/>
    <property type="match status" value="1"/>
</dbReference>
<dbReference type="InterPro" id="IPR001857">
    <property type="entry name" value="Ribosomal_bL19"/>
</dbReference>
<dbReference type="InterPro" id="IPR018257">
    <property type="entry name" value="Ribosomal_bL19_CS"/>
</dbReference>
<dbReference type="InterPro" id="IPR038657">
    <property type="entry name" value="Ribosomal_bL19_sf"/>
</dbReference>
<dbReference type="InterPro" id="IPR008991">
    <property type="entry name" value="Translation_prot_SH3-like_sf"/>
</dbReference>
<dbReference type="NCBIfam" id="TIGR01024">
    <property type="entry name" value="rplS_bact"/>
    <property type="match status" value="1"/>
</dbReference>
<dbReference type="PANTHER" id="PTHR15680:SF9">
    <property type="entry name" value="LARGE RIBOSOMAL SUBUNIT PROTEIN BL19M"/>
    <property type="match status" value="1"/>
</dbReference>
<dbReference type="PANTHER" id="PTHR15680">
    <property type="entry name" value="RIBOSOMAL PROTEIN L19"/>
    <property type="match status" value="1"/>
</dbReference>
<dbReference type="Pfam" id="PF01245">
    <property type="entry name" value="Ribosomal_L19"/>
    <property type="match status" value="1"/>
</dbReference>
<dbReference type="PIRSF" id="PIRSF002191">
    <property type="entry name" value="Ribosomal_L19"/>
    <property type="match status" value="1"/>
</dbReference>
<dbReference type="PRINTS" id="PR00061">
    <property type="entry name" value="RIBOSOMALL19"/>
</dbReference>
<dbReference type="SUPFAM" id="SSF50104">
    <property type="entry name" value="Translation proteins SH3-like domain"/>
    <property type="match status" value="1"/>
</dbReference>
<dbReference type="PROSITE" id="PS01015">
    <property type="entry name" value="RIBOSOMAL_L19"/>
    <property type="match status" value="1"/>
</dbReference>
<organism>
    <name type="scientific">Acidiphilium cryptum (strain JF-5)</name>
    <dbReference type="NCBI Taxonomy" id="349163"/>
    <lineage>
        <taxon>Bacteria</taxon>
        <taxon>Pseudomonadati</taxon>
        <taxon>Pseudomonadota</taxon>
        <taxon>Alphaproteobacteria</taxon>
        <taxon>Acetobacterales</taxon>
        <taxon>Acidocellaceae</taxon>
        <taxon>Acidiphilium</taxon>
    </lineage>
</organism>